<name>BDNF_ACRDU</name>
<organism>
    <name type="scientific">Acrantophis dumerili</name>
    <name type="common">Dumeril's ground boa</name>
    <name type="synonym">Boa dumerili</name>
    <dbReference type="NCBI Taxonomy" id="51850"/>
    <lineage>
        <taxon>Eukaryota</taxon>
        <taxon>Metazoa</taxon>
        <taxon>Chordata</taxon>
        <taxon>Craniata</taxon>
        <taxon>Vertebrata</taxon>
        <taxon>Euteleostomi</taxon>
        <taxon>Lepidosauria</taxon>
        <taxon>Squamata</taxon>
        <taxon>Bifurcata</taxon>
        <taxon>Unidentata</taxon>
        <taxon>Episquamata</taxon>
        <taxon>Toxicofera</taxon>
        <taxon>Serpentes</taxon>
        <taxon>Henophidia</taxon>
        <taxon>Boidae</taxon>
        <taxon>Boinae</taxon>
        <taxon>Acrantophis</taxon>
    </lineage>
</organism>
<proteinExistence type="inferred from homology"/>
<dbReference type="EMBL" id="AY988032">
    <property type="protein sequence ID" value="AAY44239.1"/>
    <property type="molecule type" value="Genomic_DNA"/>
</dbReference>
<dbReference type="SMR" id="Q1X706"/>
<dbReference type="GlyCosmos" id="Q1X706">
    <property type="glycosylation" value="1 site, No reported glycans"/>
</dbReference>
<dbReference type="GO" id="GO:0030424">
    <property type="term" value="C:axon"/>
    <property type="evidence" value="ECO:0007669"/>
    <property type="project" value="TreeGrafter"/>
</dbReference>
<dbReference type="GO" id="GO:0030425">
    <property type="term" value="C:dendrite"/>
    <property type="evidence" value="ECO:0007669"/>
    <property type="project" value="TreeGrafter"/>
</dbReference>
<dbReference type="GO" id="GO:0005615">
    <property type="term" value="C:extracellular space"/>
    <property type="evidence" value="ECO:0007669"/>
    <property type="project" value="TreeGrafter"/>
</dbReference>
<dbReference type="GO" id="GO:0008021">
    <property type="term" value="C:synaptic vesicle"/>
    <property type="evidence" value="ECO:0007669"/>
    <property type="project" value="TreeGrafter"/>
</dbReference>
<dbReference type="GO" id="GO:0008083">
    <property type="term" value="F:growth factor activity"/>
    <property type="evidence" value="ECO:0007669"/>
    <property type="project" value="UniProtKB-KW"/>
</dbReference>
<dbReference type="GO" id="GO:0005163">
    <property type="term" value="F:nerve growth factor receptor binding"/>
    <property type="evidence" value="ECO:0007669"/>
    <property type="project" value="TreeGrafter"/>
</dbReference>
<dbReference type="GO" id="GO:0007169">
    <property type="term" value="P:cell surface receptor protein tyrosine kinase signaling pathway"/>
    <property type="evidence" value="ECO:0007669"/>
    <property type="project" value="TreeGrafter"/>
</dbReference>
<dbReference type="GO" id="GO:0050804">
    <property type="term" value="P:modulation of chemical synaptic transmission"/>
    <property type="evidence" value="ECO:0007669"/>
    <property type="project" value="TreeGrafter"/>
</dbReference>
<dbReference type="GO" id="GO:0043524">
    <property type="term" value="P:negative regulation of neuron apoptotic process"/>
    <property type="evidence" value="ECO:0007669"/>
    <property type="project" value="TreeGrafter"/>
</dbReference>
<dbReference type="GO" id="GO:0021675">
    <property type="term" value="P:nerve development"/>
    <property type="evidence" value="ECO:0007669"/>
    <property type="project" value="TreeGrafter"/>
</dbReference>
<dbReference type="GO" id="GO:0038180">
    <property type="term" value="P:nerve growth factor signaling pathway"/>
    <property type="evidence" value="ECO:0007669"/>
    <property type="project" value="TreeGrafter"/>
</dbReference>
<dbReference type="GO" id="GO:0048812">
    <property type="term" value="P:neuron projection morphogenesis"/>
    <property type="evidence" value="ECO:0007669"/>
    <property type="project" value="TreeGrafter"/>
</dbReference>
<dbReference type="FunFam" id="2.10.90.10:FF:000002">
    <property type="entry name" value="Brain-derived neurotrophic factor"/>
    <property type="match status" value="1"/>
</dbReference>
<dbReference type="Gene3D" id="2.10.90.10">
    <property type="entry name" value="Cystine-knot cytokines"/>
    <property type="match status" value="1"/>
</dbReference>
<dbReference type="InterPro" id="IPR020430">
    <property type="entry name" value="Brain-der_neurotrophic_factor"/>
</dbReference>
<dbReference type="InterPro" id="IPR029034">
    <property type="entry name" value="Cystine-knot_cytokine"/>
</dbReference>
<dbReference type="InterPro" id="IPR020408">
    <property type="entry name" value="Nerve_growth_factor-like"/>
</dbReference>
<dbReference type="InterPro" id="IPR002072">
    <property type="entry name" value="Nerve_growth_factor-rel"/>
</dbReference>
<dbReference type="InterPro" id="IPR019846">
    <property type="entry name" value="Nerve_growth_factor_CS"/>
</dbReference>
<dbReference type="PANTHER" id="PTHR11589:SF3">
    <property type="entry name" value="BRAIN-DERIVED NEUROTROPHIC FACTOR"/>
    <property type="match status" value="1"/>
</dbReference>
<dbReference type="PANTHER" id="PTHR11589">
    <property type="entry name" value="NERVE GROWTH FACTOR NGF -RELATED"/>
    <property type="match status" value="1"/>
</dbReference>
<dbReference type="Pfam" id="PF00243">
    <property type="entry name" value="NGF"/>
    <property type="match status" value="1"/>
</dbReference>
<dbReference type="PIRSF" id="PIRSF001789">
    <property type="entry name" value="NGF"/>
    <property type="match status" value="1"/>
</dbReference>
<dbReference type="PRINTS" id="PR01912">
    <property type="entry name" value="BDNFACTOR"/>
</dbReference>
<dbReference type="PRINTS" id="PR00268">
    <property type="entry name" value="NGF"/>
</dbReference>
<dbReference type="SMART" id="SM00140">
    <property type="entry name" value="NGF"/>
    <property type="match status" value="1"/>
</dbReference>
<dbReference type="SUPFAM" id="SSF57501">
    <property type="entry name" value="Cystine-knot cytokines"/>
    <property type="match status" value="1"/>
</dbReference>
<dbReference type="PROSITE" id="PS00248">
    <property type="entry name" value="NGF_1"/>
    <property type="match status" value="1"/>
</dbReference>
<dbReference type="PROSITE" id="PS50270">
    <property type="entry name" value="NGF_2"/>
    <property type="match status" value="1"/>
</dbReference>
<gene>
    <name type="primary">BDNF</name>
</gene>
<sequence>PMKEVSIRGQGSLAYPGLRTQGNLETLSGPNDATRGLTSLADTFEHVIEELLDEQQVIQPSKENKDADLYSSRVMLSSQVPLEPPLLFLLEEYKNYLDAANMSMRVRRHSDPARRGELSVCDSTSEWVTAAEKKTAVDMSGATVTVLEKVPVPKGQLKQYFYETKCSSKGYAKEGCRGIDKRYWNSQCRTTQSYVRALTMDNKKRVGWRFIRIDTSC</sequence>
<comment type="function">
    <text evidence="1">Promotes the survival of neuronal populations that are all located either in the central nervous system or directly connected to it.</text>
</comment>
<comment type="subcellular location">
    <subcellularLocation>
        <location evidence="1">Secreted</location>
    </subcellularLocation>
</comment>
<comment type="similarity">
    <text evidence="3">Belongs to the NGF-beta family.</text>
</comment>
<evidence type="ECO:0000250" key="1"/>
<evidence type="ECO:0000255" key="2"/>
<evidence type="ECO:0000305" key="3"/>
<feature type="propeptide" id="PRO_0000346652" evidence="1">
    <location>
        <begin position="1" status="less than"/>
        <end position="108"/>
    </location>
</feature>
<feature type="chain" id="PRO_0000346653" description="Neurotrophic factor BDNF">
    <location>
        <begin position="109"/>
        <end position="217" status="greater than"/>
    </location>
</feature>
<feature type="glycosylation site" description="N-linked (GlcNAc...) asparagine" evidence="2">
    <location>
        <position position="101"/>
    </location>
</feature>
<feature type="disulfide bond" evidence="1">
    <location>
        <begin position="121"/>
        <end position="188"/>
    </location>
</feature>
<feature type="disulfide bond" evidence="1">
    <location>
        <begin position="166"/>
        <end position="217"/>
    </location>
</feature>
<feature type="non-terminal residue">
    <location>
        <position position="1"/>
    </location>
</feature>
<feature type="non-terminal residue">
    <location>
        <position position="217"/>
    </location>
</feature>
<reference key="1">
    <citation type="journal article" date="2006" name="Mol. Phylogenet. Evol.">
        <title>Dispersal and vicariance: the complex evolutionary history of boid snakes.</title>
        <authorList>
            <person name="Noonan B.P."/>
            <person name="Chippindale P.T."/>
        </authorList>
    </citation>
    <scope>NUCLEOTIDE SEQUENCE [GENOMIC DNA]</scope>
</reference>
<accession>Q1X706</accession>
<protein>
    <recommendedName>
        <fullName evidence="3">Neurotrophic factor BDNF precursor form</fullName>
        <shortName>proBDNF</shortName>
    </recommendedName>
    <alternativeName>
        <fullName>Brain-derived neurotrophic factor</fullName>
    </alternativeName>
    <component>
        <recommendedName>
            <fullName>Neurotrophic factor BDNF</fullName>
        </recommendedName>
    </component>
</protein>
<keyword id="KW-0165">Cleavage on pair of basic residues</keyword>
<keyword id="KW-1015">Disulfide bond</keyword>
<keyword id="KW-0325">Glycoprotein</keyword>
<keyword id="KW-0339">Growth factor</keyword>
<keyword id="KW-0964">Secreted</keyword>